<reference key="1">
    <citation type="journal article" date="1995" name="Nucleic Acids Res.">
        <title>Analysis of the Escherichia coli genome VI: DNA sequence of the region from 92.8 through 100 minutes.</title>
        <authorList>
            <person name="Burland V.D."/>
            <person name="Plunkett G. III"/>
            <person name="Sofia H.J."/>
            <person name="Daniels D.L."/>
            <person name="Blattner F.R."/>
        </authorList>
    </citation>
    <scope>NUCLEOTIDE SEQUENCE [LARGE SCALE GENOMIC DNA]</scope>
    <source>
        <strain>K12 / MG1655 / ATCC 47076</strain>
    </source>
</reference>
<reference key="2">
    <citation type="journal article" date="1997" name="Science">
        <title>The complete genome sequence of Escherichia coli K-12.</title>
        <authorList>
            <person name="Blattner F.R."/>
            <person name="Plunkett G. III"/>
            <person name="Bloch C.A."/>
            <person name="Perna N.T."/>
            <person name="Burland V."/>
            <person name="Riley M."/>
            <person name="Collado-Vides J."/>
            <person name="Glasner J.D."/>
            <person name="Rode C.K."/>
            <person name="Mayhew G.F."/>
            <person name="Gregor J."/>
            <person name="Davis N.W."/>
            <person name="Kirkpatrick H.A."/>
            <person name="Goeden M.A."/>
            <person name="Rose D.J."/>
            <person name="Mau B."/>
            <person name="Shao Y."/>
        </authorList>
    </citation>
    <scope>SEQUENCE REVISION</scope>
    <source>
        <strain>K12 / MG1655 / ATCC 47076</strain>
    </source>
</reference>
<reference key="3">
    <citation type="journal article" date="2006" name="Mol. Syst. Biol.">
        <title>Highly accurate genome sequences of Escherichia coli K-12 strains MG1655 and W3110.</title>
        <authorList>
            <person name="Hayashi K."/>
            <person name="Morooka N."/>
            <person name="Yamamoto Y."/>
            <person name="Fujita K."/>
            <person name="Isono K."/>
            <person name="Choi S."/>
            <person name="Ohtsubo E."/>
            <person name="Baba T."/>
            <person name="Wanner B.L."/>
            <person name="Mori H."/>
            <person name="Horiuchi T."/>
        </authorList>
    </citation>
    <scope>NUCLEOTIDE SEQUENCE [LARGE SCALE GENOMIC DNA]</scope>
    <source>
        <strain>K12 / W3110 / ATCC 27325 / DSM 5911</strain>
    </source>
</reference>
<reference key="4">
    <citation type="journal article" date="2011" name="Environ. Microbiol.">
        <title>Engineering a novel c-di-GMP-binding protein for biofilm dispersal.</title>
        <authorList>
            <person name="Ma Q."/>
            <person name="Yang Z."/>
            <person name="Pu M."/>
            <person name="Peti W."/>
            <person name="Wood T.K."/>
        </authorList>
    </citation>
    <scope>FUNCTION AS A REGULATOR</scope>
    <scope>GENE NAME</scope>
    <source>
        <strain>K12 / BW25113</strain>
    </source>
</reference>
<protein>
    <recommendedName>
        <fullName>HTH-type transcriptional repressor BdcR</fullName>
    </recommendedName>
</protein>
<gene>
    <name type="primary">bdcR</name>
    <name type="synonym">yjgJ</name>
    <name type="ordered locus">b4251</name>
    <name type="ordered locus">JW4208</name>
</gene>
<proteinExistence type="evidence at protein level"/>
<name>BDCR_ECOLI</name>
<feature type="chain" id="PRO_0000070647" description="HTH-type transcriptional repressor BdcR">
    <location>
        <begin position="1"/>
        <end position="197"/>
    </location>
</feature>
<feature type="domain" description="HTH tetR-type" evidence="1">
    <location>
        <begin position="15"/>
        <end position="75"/>
    </location>
</feature>
<feature type="DNA-binding region" description="H-T-H motif" evidence="1">
    <location>
        <begin position="38"/>
        <end position="57"/>
    </location>
</feature>
<keyword id="KW-0238">DNA-binding</keyword>
<keyword id="KW-1185">Reference proteome</keyword>
<keyword id="KW-0678">Repressor</keyword>
<keyword id="KW-0804">Transcription</keyword>
<keyword id="KW-0805">Transcription regulation</keyword>
<evidence type="ECO:0000255" key="1">
    <source>
        <dbReference type="PROSITE-ProRule" id="PRU00335"/>
    </source>
</evidence>
<evidence type="ECO:0000269" key="2">
    <source>
    </source>
</evidence>
<comment type="function">
    <text evidence="2">Negatively regulates expression of bdcA.</text>
</comment>
<dbReference type="EMBL" id="U14003">
    <property type="protein sequence ID" value="AAA97147.1"/>
    <property type="status" value="ALT_FRAME"/>
    <property type="molecule type" value="Genomic_DNA"/>
</dbReference>
<dbReference type="EMBL" id="U00096">
    <property type="protein sequence ID" value="AAC77208.2"/>
    <property type="molecule type" value="Genomic_DNA"/>
</dbReference>
<dbReference type="EMBL" id="AP009048">
    <property type="protein sequence ID" value="BAE78248.1"/>
    <property type="molecule type" value="Genomic_DNA"/>
</dbReference>
<dbReference type="PIR" id="S56476">
    <property type="entry name" value="S56476"/>
</dbReference>
<dbReference type="RefSeq" id="NP_418672.4">
    <property type="nucleotide sequence ID" value="NC_000913.3"/>
</dbReference>
<dbReference type="RefSeq" id="WP_000256658.1">
    <property type="nucleotide sequence ID" value="NZ_LN832404.1"/>
</dbReference>
<dbReference type="SMR" id="P39334"/>
<dbReference type="BioGRID" id="4259559">
    <property type="interactions" value="285"/>
</dbReference>
<dbReference type="FunCoup" id="P39334">
    <property type="interactions" value="30"/>
</dbReference>
<dbReference type="IntAct" id="P39334">
    <property type="interactions" value="1"/>
</dbReference>
<dbReference type="STRING" id="511145.b4251"/>
<dbReference type="jPOST" id="P39334"/>
<dbReference type="PaxDb" id="511145-b4251"/>
<dbReference type="EnsemblBacteria" id="AAC77208">
    <property type="protein sequence ID" value="AAC77208"/>
    <property type="gene ID" value="b4251"/>
</dbReference>
<dbReference type="GeneID" id="948775"/>
<dbReference type="KEGG" id="ecj:JW4208"/>
<dbReference type="KEGG" id="eco:b4251"/>
<dbReference type="KEGG" id="ecoc:C3026_22935"/>
<dbReference type="PATRIC" id="fig|1411691.4.peg.2453"/>
<dbReference type="EchoBASE" id="EB2419"/>
<dbReference type="eggNOG" id="COG1309">
    <property type="taxonomic scope" value="Bacteria"/>
</dbReference>
<dbReference type="HOGENOM" id="CLU_069356_28_0_6"/>
<dbReference type="InParanoid" id="P39334"/>
<dbReference type="OMA" id="HARGYDA"/>
<dbReference type="OrthoDB" id="270177at2"/>
<dbReference type="PhylomeDB" id="P39334"/>
<dbReference type="BioCyc" id="EcoCyc:G7882-MONOMER"/>
<dbReference type="PRO" id="PR:P39334"/>
<dbReference type="Proteomes" id="UP000000625">
    <property type="component" value="Chromosome"/>
</dbReference>
<dbReference type="GO" id="GO:0003700">
    <property type="term" value="F:DNA-binding transcription factor activity"/>
    <property type="evidence" value="ECO:0000318"/>
    <property type="project" value="GO_Central"/>
</dbReference>
<dbReference type="GO" id="GO:0000976">
    <property type="term" value="F:transcription cis-regulatory region binding"/>
    <property type="evidence" value="ECO:0000318"/>
    <property type="project" value="GO_Central"/>
</dbReference>
<dbReference type="GO" id="GO:0045892">
    <property type="term" value="P:negative regulation of DNA-templated transcription"/>
    <property type="evidence" value="ECO:0000315"/>
    <property type="project" value="EcoCyc"/>
</dbReference>
<dbReference type="GO" id="GO:0006355">
    <property type="term" value="P:regulation of DNA-templated transcription"/>
    <property type="evidence" value="ECO:0000318"/>
    <property type="project" value="GO_Central"/>
</dbReference>
<dbReference type="Gene3D" id="1.10.10.60">
    <property type="entry name" value="Homeodomain-like"/>
    <property type="match status" value="1"/>
</dbReference>
<dbReference type="Gene3D" id="1.10.357.10">
    <property type="entry name" value="Tetracycline Repressor, domain 2"/>
    <property type="match status" value="1"/>
</dbReference>
<dbReference type="InterPro" id="IPR023772">
    <property type="entry name" value="DNA-bd_HTH_TetR-type_CS"/>
</dbReference>
<dbReference type="InterPro" id="IPR009057">
    <property type="entry name" value="Homeodomain-like_sf"/>
</dbReference>
<dbReference type="InterPro" id="IPR001647">
    <property type="entry name" value="HTH_TetR"/>
</dbReference>
<dbReference type="InterPro" id="IPR036271">
    <property type="entry name" value="Tet_transcr_reg_TetR-rel_C_sf"/>
</dbReference>
<dbReference type="PANTHER" id="PTHR47506:SF1">
    <property type="entry name" value="HTH-TYPE TRANSCRIPTIONAL REGULATOR YJDC"/>
    <property type="match status" value="1"/>
</dbReference>
<dbReference type="PANTHER" id="PTHR47506">
    <property type="entry name" value="TRANSCRIPTIONAL REGULATORY PROTEIN"/>
    <property type="match status" value="1"/>
</dbReference>
<dbReference type="Pfam" id="PF00440">
    <property type="entry name" value="TetR_N"/>
    <property type="match status" value="1"/>
</dbReference>
<dbReference type="SUPFAM" id="SSF46689">
    <property type="entry name" value="Homeodomain-like"/>
    <property type="match status" value="1"/>
</dbReference>
<dbReference type="SUPFAM" id="SSF48498">
    <property type="entry name" value="Tetracyclin repressor-like, C-terminal domain"/>
    <property type="match status" value="1"/>
</dbReference>
<dbReference type="PROSITE" id="PS01081">
    <property type="entry name" value="HTH_TETR_1"/>
    <property type="match status" value="1"/>
</dbReference>
<dbReference type="PROSITE" id="PS50977">
    <property type="entry name" value="HTH_TETR_2"/>
    <property type="match status" value="1"/>
</dbReference>
<accession>P39334</accession>
<accession>P76809</accession>
<accession>Q2M658</accession>
<organism>
    <name type="scientific">Escherichia coli (strain K12)</name>
    <dbReference type="NCBI Taxonomy" id="83333"/>
    <lineage>
        <taxon>Bacteria</taxon>
        <taxon>Pseudomonadati</taxon>
        <taxon>Pseudomonadota</taxon>
        <taxon>Gammaproteobacteria</taxon>
        <taxon>Enterobacterales</taxon>
        <taxon>Enterobacteriaceae</taxon>
        <taxon>Escherichia</taxon>
    </lineage>
</organism>
<sequence>MVTKKQSRVPGRPRRFAPEQAISAAKVLFHQKGFDAVSVAEVTDYLGINPPSLYAAFGSKAGLFSRVLNEYVGTEAIPLADILRDDRPVGECLVEVLKEAARRYSQNGGCAGCMVLEGIHSHDPQARDIAVQYYHAAETTIYDYIARRHPQRAQCVTDFMSTVMSGLSAKAREGHSIEQLCATAAMAGEAIKTILEE</sequence>